<comment type="function">
    <text evidence="1">Binds directly to 23S ribosomal RNA and is necessary for the in vitro assembly process of the 50S ribosomal subunit. It is not involved in the protein synthesizing functions of that subunit.</text>
</comment>
<comment type="similarity">
    <text evidence="1">Belongs to the bacterial ribosomal protein bL20 family.</text>
</comment>
<protein>
    <recommendedName>
        <fullName evidence="1">Large ribosomal subunit protein bL20</fullName>
    </recommendedName>
    <alternativeName>
        <fullName evidence="2">50S ribosomal protein L20</fullName>
    </alternativeName>
</protein>
<proteinExistence type="inferred from homology"/>
<evidence type="ECO:0000255" key="1">
    <source>
        <dbReference type="HAMAP-Rule" id="MF_00382"/>
    </source>
</evidence>
<evidence type="ECO:0000305" key="2"/>
<dbReference type="EMBL" id="CP000749">
    <property type="protein sequence ID" value="ABR71507.1"/>
    <property type="molecule type" value="Genomic_DNA"/>
</dbReference>
<dbReference type="SMR" id="A6VYH8"/>
<dbReference type="STRING" id="400668.Mmwyl1_2594"/>
<dbReference type="KEGG" id="mmw:Mmwyl1_2594"/>
<dbReference type="eggNOG" id="COG0292">
    <property type="taxonomic scope" value="Bacteria"/>
</dbReference>
<dbReference type="HOGENOM" id="CLU_123265_0_1_6"/>
<dbReference type="OrthoDB" id="9808966at2"/>
<dbReference type="GO" id="GO:1990904">
    <property type="term" value="C:ribonucleoprotein complex"/>
    <property type="evidence" value="ECO:0007669"/>
    <property type="project" value="UniProtKB-KW"/>
</dbReference>
<dbReference type="GO" id="GO:0005840">
    <property type="term" value="C:ribosome"/>
    <property type="evidence" value="ECO:0007669"/>
    <property type="project" value="UniProtKB-KW"/>
</dbReference>
<dbReference type="GO" id="GO:0019843">
    <property type="term" value="F:rRNA binding"/>
    <property type="evidence" value="ECO:0007669"/>
    <property type="project" value="UniProtKB-UniRule"/>
</dbReference>
<dbReference type="GO" id="GO:0003735">
    <property type="term" value="F:structural constituent of ribosome"/>
    <property type="evidence" value="ECO:0007669"/>
    <property type="project" value="InterPro"/>
</dbReference>
<dbReference type="GO" id="GO:0000027">
    <property type="term" value="P:ribosomal large subunit assembly"/>
    <property type="evidence" value="ECO:0007669"/>
    <property type="project" value="UniProtKB-UniRule"/>
</dbReference>
<dbReference type="GO" id="GO:0006412">
    <property type="term" value="P:translation"/>
    <property type="evidence" value="ECO:0007669"/>
    <property type="project" value="InterPro"/>
</dbReference>
<dbReference type="CDD" id="cd07026">
    <property type="entry name" value="Ribosomal_L20"/>
    <property type="match status" value="1"/>
</dbReference>
<dbReference type="FunFam" id="1.10.1900.20:FF:000001">
    <property type="entry name" value="50S ribosomal protein L20"/>
    <property type="match status" value="1"/>
</dbReference>
<dbReference type="Gene3D" id="6.10.160.10">
    <property type="match status" value="1"/>
</dbReference>
<dbReference type="Gene3D" id="1.10.1900.20">
    <property type="entry name" value="Ribosomal protein L20"/>
    <property type="match status" value="1"/>
</dbReference>
<dbReference type="HAMAP" id="MF_00382">
    <property type="entry name" value="Ribosomal_bL20"/>
    <property type="match status" value="1"/>
</dbReference>
<dbReference type="InterPro" id="IPR005813">
    <property type="entry name" value="Ribosomal_bL20"/>
</dbReference>
<dbReference type="InterPro" id="IPR049946">
    <property type="entry name" value="RIBOSOMAL_L20_CS"/>
</dbReference>
<dbReference type="InterPro" id="IPR035566">
    <property type="entry name" value="Ribosomal_protein_bL20_C"/>
</dbReference>
<dbReference type="NCBIfam" id="TIGR01032">
    <property type="entry name" value="rplT_bact"/>
    <property type="match status" value="1"/>
</dbReference>
<dbReference type="PANTHER" id="PTHR10986">
    <property type="entry name" value="39S RIBOSOMAL PROTEIN L20"/>
    <property type="match status" value="1"/>
</dbReference>
<dbReference type="Pfam" id="PF00453">
    <property type="entry name" value="Ribosomal_L20"/>
    <property type="match status" value="1"/>
</dbReference>
<dbReference type="PRINTS" id="PR00062">
    <property type="entry name" value="RIBOSOMALL20"/>
</dbReference>
<dbReference type="SUPFAM" id="SSF74731">
    <property type="entry name" value="Ribosomal protein L20"/>
    <property type="match status" value="1"/>
</dbReference>
<dbReference type="PROSITE" id="PS00937">
    <property type="entry name" value="RIBOSOMAL_L20"/>
    <property type="match status" value="1"/>
</dbReference>
<keyword id="KW-0687">Ribonucleoprotein</keyword>
<keyword id="KW-0689">Ribosomal protein</keyword>
<keyword id="KW-0694">RNA-binding</keyword>
<keyword id="KW-0699">rRNA-binding</keyword>
<reference key="1">
    <citation type="submission" date="2007-06" db="EMBL/GenBank/DDBJ databases">
        <title>Complete sequence of Marinomonas sp. MWYL1.</title>
        <authorList>
            <consortium name="US DOE Joint Genome Institute"/>
            <person name="Copeland A."/>
            <person name="Lucas S."/>
            <person name="Lapidus A."/>
            <person name="Barry K."/>
            <person name="Glavina del Rio T."/>
            <person name="Dalin E."/>
            <person name="Tice H."/>
            <person name="Pitluck S."/>
            <person name="Kiss H."/>
            <person name="Brettin T."/>
            <person name="Bruce D."/>
            <person name="Detter J.C."/>
            <person name="Han C."/>
            <person name="Schmutz J."/>
            <person name="Larimer F."/>
            <person name="Land M."/>
            <person name="Hauser L."/>
            <person name="Kyrpides N."/>
            <person name="Kim E."/>
            <person name="Johnston A.W.B."/>
            <person name="Todd J.D."/>
            <person name="Rogers R."/>
            <person name="Wexler M."/>
            <person name="Bond P.L."/>
            <person name="Li Y."/>
            <person name="Richardson P."/>
        </authorList>
    </citation>
    <scope>NUCLEOTIDE SEQUENCE [LARGE SCALE GENOMIC DNA]</scope>
    <source>
        <strain>MWYL1</strain>
    </source>
</reference>
<name>RL20_MARMS</name>
<gene>
    <name evidence="1" type="primary">rplT</name>
    <name type="ordered locus">Mmwyl1_2594</name>
</gene>
<organism>
    <name type="scientific">Marinomonas sp. (strain MWYL1)</name>
    <dbReference type="NCBI Taxonomy" id="400668"/>
    <lineage>
        <taxon>Bacteria</taxon>
        <taxon>Pseudomonadati</taxon>
        <taxon>Pseudomonadota</taxon>
        <taxon>Gammaproteobacteria</taxon>
        <taxon>Oceanospirillales</taxon>
        <taxon>Oceanospirillaceae</taxon>
        <taxon>Marinomonas</taxon>
    </lineage>
</organism>
<sequence>MPRVKRGVQARRRHKKILKQAKGYYGARSRVFRVAKQAVIKAGQYQYRDRRQRKRQFRALWIARINAAARINGLSYSRFIAGLKQAAIEIDRKVLADLAVYEKEVFAAIVEKAKVSLA</sequence>
<accession>A6VYH8</accession>
<feature type="chain" id="PRO_1000080078" description="Large ribosomal subunit protein bL20">
    <location>
        <begin position="1"/>
        <end position="118"/>
    </location>
</feature>